<name>FOMT2_WHEAT</name>
<gene>
    <name type="primary">OMT2</name>
</gene>
<keyword id="KW-0284">Flavonoid biosynthesis</keyword>
<keyword id="KW-0438">Lignin biosynthesis</keyword>
<keyword id="KW-0489">Methyltransferase</keyword>
<keyword id="KW-1185">Reference proteome</keyword>
<keyword id="KW-0949">S-adenosyl-L-methionine</keyword>
<keyword id="KW-0808">Transferase</keyword>
<organism>
    <name type="scientific">Triticum aestivum</name>
    <name type="common">Wheat</name>
    <dbReference type="NCBI Taxonomy" id="4565"/>
    <lineage>
        <taxon>Eukaryota</taxon>
        <taxon>Viridiplantae</taxon>
        <taxon>Streptophyta</taxon>
        <taxon>Embryophyta</taxon>
        <taxon>Tracheophyta</taxon>
        <taxon>Spermatophyta</taxon>
        <taxon>Magnoliopsida</taxon>
        <taxon>Liliopsida</taxon>
        <taxon>Poales</taxon>
        <taxon>Poaceae</taxon>
        <taxon>BOP clade</taxon>
        <taxon>Pooideae</taxon>
        <taxon>Triticodae</taxon>
        <taxon>Triticeae</taxon>
        <taxon>Triticinae</taxon>
        <taxon>Triticum</taxon>
    </lineage>
</organism>
<protein>
    <recommendedName>
        <fullName>Tricetin 3',4',5'-O-trimethyltransferase</fullName>
        <shortName>TaOMT2</shortName>
        <ecNumber>2.1.1.169</ecNumber>
    </recommendedName>
    <alternativeName>
        <fullName>Caffeic acid 3-O-methyltransferase</fullName>
        <shortName>TaCM</shortName>
    </alternativeName>
    <alternativeName>
        <fullName>Flavone O-methyltransferase 2</fullName>
    </alternativeName>
</protein>
<reference key="1">
    <citation type="journal article" date="2006" name="Biochim. Biophys. Acta">
        <title>Sequential O-methylation of tricetin by a single gene product in wheat.</title>
        <authorList>
            <person name="Zhou J.M."/>
            <person name="Gold N.D."/>
            <person name="Martin V.J."/>
            <person name="Wollenweber E."/>
            <person name="Ibrahim R.K."/>
        </authorList>
    </citation>
    <scope>NUCLEOTIDE SEQUENCE [MRNA]</scope>
    <scope>FUNCTION</scope>
    <scope>CATALYTIC ACTIVITY</scope>
    <scope>BIOPHYSICOCHEMICAL PROPERTIES</scope>
    <source>
        <strain>cv. Norstar</strain>
    </source>
</reference>
<reference key="2">
    <citation type="journal article" date="2008" name="Biochimie">
        <title>Characterization of a caffeic acid 3-O-methyltransferase from wheat and its function in lignin biosynthesis.</title>
        <authorList>
            <person name="Ma Q.H."/>
            <person name="Xu Y."/>
        </authorList>
    </citation>
    <scope>NUCLEOTIDE SEQUENCE [MRNA]</scope>
    <scope>TISSUE SPECIFICITY</scope>
    <scope>FUNCTION</scope>
    <scope>CATALYTIC ACTIVITY</scope>
    <scope>BIOPHYSICOCHEMICAL PROPERTIES</scope>
    <source>
        <strain>cv. H4564</strain>
    </source>
</reference>
<reference key="3">
    <citation type="journal article" date="2008" name="FEBS J.">
        <title>Structure-activity relationships of wheat flavone O-methyltransferase: a homodimer of convenience.</title>
        <authorList>
            <person name="Kornblatt J.A."/>
            <person name="Zhou J.M."/>
            <person name="Ibrahim R.K."/>
        </authorList>
    </citation>
    <scope>CATALYTIC ACTIVITY</scope>
    <scope>SUBUNIT</scope>
</reference>
<proteinExistence type="evidence at protein level"/>
<dbReference type="EC" id="2.1.1.169"/>
<dbReference type="EMBL" id="DQ223971">
    <property type="protein sequence ID" value="ABB03907.1"/>
    <property type="molecule type" value="mRNA"/>
</dbReference>
<dbReference type="EMBL" id="EF413031">
    <property type="protein sequence ID" value="ABP63535.1"/>
    <property type="molecule type" value="mRNA"/>
</dbReference>
<dbReference type="SMR" id="Q38J50"/>
<dbReference type="STRING" id="4565.Q38J50"/>
<dbReference type="PaxDb" id="4565-Traes_3B_E7624B49D.1"/>
<dbReference type="KEGG" id="ag:ABB03907"/>
<dbReference type="eggNOG" id="KOG3178">
    <property type="taxonomic scope" value="Eukaryota"/>
</dbReference>
<dbReference type="BioCyc" id="MetaCyc:MONOMER-15895"/>
<dbReference type="BRENDA" id="2.1.1.104">
    <property type="organism ID" value="6500"/>
</dbReference>
<dbReference type="BRENDA" id="2.1.1.169">
    <property type="organism ID" value="6500"/>
</dbReference>
<dbReference type="BRENDA" id="2.1.1.68">
    <property type="organism ID" value="6500"/>
</dbReference>
<dbReference type="SABIO-RK" id="Q38J50"/>
<dbReference type="Proteomes" id="UP000019116">
    <property type="component" value="Unplaced"/>
</dbReference>
<dbReference type="ExpressionAtlas" id="Q38J50">
    <property type="expression patterns" value="baseline and differential"/>
</dbReference>
<dbReference type="GO" id="GO:0008171">
    <property type="term" value="F:O-methyltransferase activity"/>
    <property type="evidence" value="ECO:0000318"/>
    <property type="project" value="GO_Central"/>
</dbReference>
<dbReference type="GO" id="GO:0046983">
    <property type="term" value="F:protein dimerization activity"/>
    <property type="evidence" value="ECO:0007669"/>
    <property type="project" value="InterPro"/>
</dbReference>
<dbReference type="GO" id="GO:0008757">
    <property type="term" value="F:S-adenosylmethionine-dependent methyltransferase activity"/>
    <property type="evidence" value="ECO:0000318"/>
    <property type="project" value="GO_Central"/>
</dbReference>
<dbReference type="GO" id="GO:0009058">
    <property type="term" value="P:biosynthetic process"/>
    <property type="evidence" value="ECO:0000318"/>
    <property type="project" value="GO_Central"/>
</dbReference>
<dbReference type="GO" id="GO:0009813">
    <property type="term" value="P:flavonoid biosynthetic process"/>
    <property type="evidence" value="ECO:0007669"/>
    <property type="project" value="UniProtKB-KW"/>
</dbReference>
<dbReference type="GO" id="GO:0009809">
    <property type="term" value="P:lignin biosynthetic process"/>
    <property type="evidence" value="ECO:0007669"/>
    <property type="project" value="UniProtKB-KW"/>
</dbReference>
<dbReference type="GO" id="GO:0032259">
    <property type="term" value="P:methylation"/>
    <property type="evidence" value="ECO:0000318"/>
    <property type="project" value="GO_Central"/>
</dbReference>
<dbReference type="FunFam" id="1.10.10.10:FF:000473">
    <property type="entry name" value="Caffeic acid O-methyltransferase"/>
    <property type="match status" value="1"/>
</dbReference>
<dbReference type="FunFam" id="3.40.50.150:FF:000061">
    <property type="entry name" value="Caffeic acid O-methyltransferase"/>
    <property type="match status" value="1"/>
</dbReference>
<dbReference type="Gene3D" id="3.40.50.150">
    <property type="entry name" value="Vaccinia Virus protein VP39"/>
    <property type="match status" value="1"/>
</dbReference>
<dbReference type="Gene3D" id="1.10.10.10">
    <property type="entry name" value="Winged helix-like DNA-binding domain superfamily/Winged helix DNA-binding domain"/>
    <property type="match status" value="1"/>
</dbReference>
<dbReference type="InterPro" id="IPR016461">
    <property type="entry name" value="COMT-like"/>
</dbReference>
<dbReference type="InterPro" id="IPR001077">
    <property type="entry name" value="O_MeTrfase_dom"/>
</dbReference>
<dbReference type="InterPro" id="IPR012967">
    <property type="entry name" value="Plant_O-MeTrfase_dimerisation"/>
</dbReference>
<dbReference type="InterPro" id="IPR029063">
    <property type="entry name" value="SAM-dependent_MTases_sf"/>
</dbReference>
<dbReference type="InterPro" id="IPR036388">
    <property type="entry name" value="WH-like_DNA-bd_sf"/>
</dbReference>
<dbReference type="InterPro" id="IPR036390">
    <property type="entry name" value="WH_DNA-bd_sf"/>
</dbReference>
<dbReference type="PANTHER" id="PTHR11746">
    <property type="entry name" value="O-METHYLTRANSFERASE"/>
    <property type="match status" value="1"/>
</dbReference>
<dbReference type="Pfam" id="PF08100">
    <property type="entry name" value="Dimerisation"/>
    <property type="match status" value="1"/>
</dbReference>
<dbReference type="Pfam" id="PF00891">
    <property type="entry name" value="Methyltransf_2"/>
    <property type="match status" value="1"/>
</dbReference>
<dbReference type="PIRSF" id="PIRSF005739">
    <property type="entry name" value="O-mtase"/>
    <property type="match status" value="1"/>
</dbReference>
<dbReference type="SUPFAM" id="SSF53335">
    <property type="entry name" value="S-adenosyl-L-methionine-dependent methyltransferases"/>
    <property type="match status" value="1"/>
</dbReference>
<dbReference type="SUPFAM" id="SSF46785">
    <property type="entry name" value="Winged helix' DNA-binding domain"/>
    <property type="match status" value="1"/>
</dbReference>
<dbReference type="PROSITE" id="PS51683">
    <property type="entry name" value="SAM_OMT_II"/>
    <property type="match status" value="1"/>
</dbReference>
<evidence type="ECO:0000250" key="1"/>
<evidence type="ECO:0000255" key="2">
    <source>
        <dbReference type="PROSITE-ProRule" id="PRU01020"/>
    </source>
</evidence>
<evidence type="ECO:0000269" key="3">
    <source>
    </source>
</evidence>
<evidence type="ECO:0000269" key="4">
    <source>
    </source>
</evidence>
<evidence type="ECO:0000269" key="5">
    <source>
    </source>
</evidence>
<evidence type="ECO:0000305" key="6"/>
<feature type="chain" id="PRO_0000403987" description="Tricetin 3',4',5'-O-trimethyltransferase">
    <location>
        <begin position="1"/>
        <end position="356"/>
    </location>
</feature>
<feature type="region of interest" description="Substrate binding" evidence="1">
    <location>
        <begin position="155"/>
        <end position="173"/>
    </location>
</feature>
<feature type="active site" description="Proton acceptor" evidence="2">
    <location>
        <position position="262"/>
    </location>
</feature>
<feature type="binding site" evidence="1">
    <location>
        <begin position="123"/>
        <end position="129"/>
    </location>
    <ligand>
        <name>substrate</name>
    </ligand>
</feature>
<feature type="binding site" evidence="2">
    <location>
        <position position="201"/>
    </location>
    <ligand>
        <name>S-adenosyl-L-methionine</name>
        <dbReference type="ChEBI" id="CHEBI:59789"/>
    </ligand>
</feature>
<feature type="binding site" evidence="2">
    <location>
        <position position="224"/>
    </location>
    <ligand>
        <name>S-adenosyl-L-methionine</name>
        <dbReference type="ChEBI" id="CHEBI:59789"/>
    </ligand>
</feature>
<feature type="binding site" evidence="2">
    <location>
        <position position="244"/>
    </location>
    <ligand>
        <name>S-adenosyl-L-methionine</name>
        <dbReference type="ChEBI" id="CHEBI:59789"/>
    </ligand>
</feature>
<feature type="binding site" evidence="2">
    <location>
        <position position="245"/>
    </location>
    <ligand>
        <name>S-adenosyl-L-methionine</name>
        <dbReference type="ChEBI" id="CHEBI:59789"/>
    </ligand>
</feature>
<feature type="binding site" evidence="2">
    <location>
        <position position="258"/>
    </location>
    <ligand>
        <name>S-adenosyl-L-methionine</name>
        <dbReference type="ChEBI" id="CHEBI:59789"/>
    </ligand>
</feature>
<feature type="sequence conflict" description="In Ref. 2; ABP63535." evidence="6" ref="2">
    <original>D</original>
    <variation>E</variation>
    <location>
        <position position="89"/>
    </location>
</feature>
<feature type="sequence conflict" description="In Ref. 2; ABP63535." evidence="6" ref="2">
    <original>G</original>
    <variation>A</variation>
    <location>
        <position position="252"/>
    </location>
</feature>
<comment type="function">
    <text evidence="3 4">Flavonoid B-ring-specific O-methyltransferase with a preference for flavones &gt; dihydroflavones &gt; flavonols that possess at least two B-ring hydroxyl groups. Active with tricetin, 5-hydroxyferulic acid, luteolin, quercitin, eriodictyol, quercetagetin, taxifolin, gossypetin and myricetin. No activity with naringenin, apigenin, kaempferol, 7,8-dihydroxy- or 5,7,8-trihydroxy flavones, chlorogenic acid, gallic acid or daphnetin. Catalyzes the sequential O-methylation of tricetin via 3'-O-methyltricetin, 3',5'-O-methyltricetin to 3',4',5'-O-trimethyltricetin. May also be involved in S lignin biosynthesis.</text>
</comment>
<comment type="catalytic activity">
    <reaction evidence="3 4 5">
        <text>tricetin + 3 S-adenosyl-L-methionine = 3',4',5'-O-trimethyltricetin + 3 S-adenosyl-L-homocysteine + 3 H(+)</text>
        <dbReference type="Rhea" id="RHEA:32351"/>
        <dbReference type="ChEBI" id="CHEBI:15378"/>
        <dbReference type="ChEBI" id="CHEBI:57856"/>
        <dbReference type="ChEBI" id="CHEBI:59789"/>
        <dbReference type="ChEBI" id="CHEBI:60020"/>
        <dbReference type="ChEBI" id="CHEBI:60045"/>
        <dbReference type="EC" id="2.1.1.169"/>
    </reaction>
</comment>
<comment type="biophysicochemical properties">
    <kinetics>
        <KM evidence="3 4">3.73 uM for tricetin</KM>
        <KM evidence="3 4">3.33 uM for S-adenosyl-L-methionine</KM>
        <KM evidence="3 4">8.36 uM for 5-hydroxyferulic acid</KM>
        <KM evidence="3 4">6.59 uM for myricetin</KM>
        <KM evidence="3 4">68.75 uM for caffeic acid</KM>
        <KM evidence="3 4">83.04 uM for caffeoyl-CoA</KM>
        <KM evidence="3 4">95.17 uM for 5-hydroxyferuloyl-CoA</KM>
        <KM evidence="3 4">43.72 uM for caffeoyl aldehyde</KM>
        <KM evidence="3 4">17.31 uM for 5-hydroxyconiferaldehyde</KM>
        <KM evidence="3 4">84.03 uM for caffeoyl alcohol</KM>
        <KM evidence="3 4">100.21 uM for 5-hydroxyconiferyl alcohol</KM>
        <Vmax evidence="3 4">142.86 pmol/sec/mg enzyme with tricetin as methyl acceptor</Vmax>
        <Vmax evidence="3 4">88.5 pmol/sec/mg enzyme with 5-hydroxyferulic acid as methyl acceptor</Vmax>
        <Vmax evidence="3 4">45.66 pmol/sec/mg enzyme with myricetin as methyl acceptor</Vmax>
        <Vmax evidence="3 4">2.38 nmol/sec/mg enzyme with caffeic acid as methyl acceptor</Vmax>
        <Vmax evidence="3 4">1.26 nmol/sec/mg enzyme with caffeoyl-CoA as methyl acceptor</Vmax>
        <Vmax evidence="3 4">1.28 nmol/sec/mg enzyme with 5-hydroxyferuloyl-CoA as methyl acceptor</Vmax>
        <Vmax evidence="3 4">2.56 nmol/sec/mg enzyme with caffeoyl aldehyde as methyl acceptor</Vmax>
        <Vmax evidence="3 4">1.56 nmol/sec/mg enzyme with 5-hydroxyconiferaldehyde as methyl acceptor</Vmax>
        <Vmax evidence="3 4">3.55 nmol/sec/mg enzyme with caffeoyl alcohol as methyl acceptor</Vmax>
        <Vmax evidence="3 4">2.67 nmol/sec/mg enzyme with 5-hydroxyconiferyl alcohol as methyl acceptor</Vmax>
    </kinetics>
</comment>
<comment type="subunit">
    <text evidence="5">Homodimer. The monomer is fully active and dimerization is not required for sequential methylation.</text>
</comment>
<comment type="tissue specificity">
    <text evidence="4">Expressed in roots, stems and leaves.</text>
</comment>
<comment type="miscellaneous">
    <text>OMT1 has a very low activity with phenylpropanoids (5-hydroxyferulic acid and caffeic acid) while OMT2 has a good activity with them.</text>
</comment>
<comment type="similarity">
    <text evidence="2">Belongs to the class I-like SAM-binding methyltransferase superfamily. Cation-independent O-methyltransferase family. COMT subfamily.</text>
</comment>
<accession>Q38J50</accession>
<accession>B8LGB9</accession>
<sequence>MGSIAAGADEDACMYALQLVSSSILPMTLKNAIELGLLETLMAAGGKFLTPAEVAAKLPSAANPEAPDMVDRMLRLLASYNVVSCRTEDGKDGRLSRRYGAAPVCKYLTPNEDGVSMSALALMNQDKVLMESWYYLKDAVLDGGIPFNKAYGMSAFEYHGTDPRFNRVFNEGMKNHSIIITKKLLESYKGFEGLGTLVDVGGGVGATVAAITAHYPTIKGINFDLPHVISEAPPFPGVTHVGGDMFQKVPSGDAILMKWILHDWSDEHCATLLKNCYDALPAHGKVVLVECILPVNPEATPKAQGVFHVDMIMLAHNPGGRERYEREFEALAKGAGFAAMKTTYIYANAWAIEFTK</sequence>